<dbReference type="EMBL" id="CP000157">
    <property type="protein sequence ID" value="ABC62507.1"/>
    <property type="molecule type" value="Genomic_DNA"/>
</dbReference>
<dbReference type="RefSeq" id="WP_011413383.1">
    <property type="nucleotide sequence ID" value="NC_007722.1"/>
</dbReference>
<dbReference type="SMR" id="Q2NCT4"/>
<dbReference type="STRING" id="314225.ELI_02075"/>
<dbReference type="KEGG" id="eli:ELI_02075"/>
<dbReference type="eggNOG" id="COG0353">
    <property type="taxonomic scope" value="Bacteria"/>
</dbReference>
<dbReference type="HOGENOM" id="CLU_060739_1_1_5"/>
<dbReference type="OrthoDB" id="9802672at2"/>
<dbReference type="Proteomes" id="UP000008808">
    <property type="component" value="Chromosome"/>
</dbReference>
<dbReference type="GO" id="GO:0003677">
    <property type="term" value="F:DNA binding"/>
    <property type="evidence" value="ECO:0007669"/>
    <property type="project" value="UniProtKB-UniRule"/>
</dbReference>
<dbReference type="GO" id="GO:0008270">
    <property type="term" value="F:zinc ion binding"/>
    <property type="evidence" value="ECO:0007669"/>
    <property type="project" value="UniProtKB-KW"/>
</dbReference>
<dbReference type="GO" id="GO:0006310">
    <property type="term" value="P:DNA recombination"/>
    <property type="evidence" value="ECO:0007669"/>
    <property type="project" value="UniProtKB-UniRule"/>
</dbReference>
<dbReference type="GO" id="GO:0006281">
    <property type="term" value="P:DNA repair"/>
    <property type="evidence" value="ECO:0007669"/>
    <property type="project" value="UniProtKB-UniRule"/>
</dbReference>
<dbReference type="CDD" id="cd01025">
    <property type="entry name" value="TOPRIM_recR"/>
    <property type="match status" value="1"/>
</dbReference>
<dbReference type="Gene3D" id="3.40.1360.10">
    <property type="match status" value="1"/>
</dbReference>
<dbReference type="Gene3D" id="6.10.250.240">
    <property type="match status" value="1"/>
</dbReference>
<dbReference type="Gene3D" id="1.10.8.420">
    <property type="entry name" value="RecR Domain 1"/>
    <property type="match status" value="1"/>
</dbReference>
<dbReference type="HAMAP" id="MF_00017">
    <property type="entry name" value="RecR"/>
    <property type="match status" value="1"/>
</dbReference>
<dbReference type="InterPro" id="IPR000093">
    <property type="entry name" value="DNA_Rcmb_RecR"/>
</dbReference>
<dbReference type="InterPro" id="IPR023627">
    <property type="entry name" value="Rcmb_RecR"/>
</dbReference>
<dbReference type="InterPro" id="IPR015967">
    <property type="entry name" value="Rcmb_RecR_Znf"/>
</dbReference>
<dbReference type="InterPro" id="IPR006171">
    <property type="entry name" value="TOPRIM_dom"/>
</dbReference>
<dbReference type="InterPro" id="IPR034137">
    <property type="entry name" value="TOPRIM_RecR"/>
</dbReference>
<dbReference type="NCBIfam" id="TIGR00615">
    <property type="entry name" value="recR"/>
    <property type="match status" value="1"/>
</dbReference>
<dbReference type="PANTHER" id="PTHR30446">
    <property type="entry name" value="RECOMBINATION PROTEIN RECR"/>
    <property type="match status" value="1"/>
</dbReference>
<dbReference type="PANTHER" id="PTHR30446:SF0">
    <property type="entry name" value="RECOMBINATION PROTEIN RECR"/>
    <property type="match status" value="1"/>
</dbReference>
<dbReference type="Pfam" id="PF21175">
    <property type="entry name" value="RecR_C"/>
    <property type="match status" value="1"/>
</dbReference>
<dbReference type="Pfam" id="PF21176">
    <property type="entry name" value="RecR_HhH"/>
    <property type="match status" value="1"/>
</dbReference>
<dbReference type="Pfam" id="PF02132">
    <property type="entry name" value="RecR_ZnF"/>
    <property type="match status" value="1"/>
</dbReference>
<dbReference type="Pfam" id="PF13662">
    <property type="entry name" value="Toprim_4"/>
    <property type="match status" value="1"/>
</dbReference>
<dbReference type="SMART" id="SM00493">
    <property type="entry name" value="TOPRIM"/>
    <property type="match status" value="1"/>
</dbReference>
<dbReference type="SUPFAM" id="SSF111304">
    <property type="entry name" value="Recombination protein RecR"/>
    <property type="match status" value="1"/>
</dbReference>
<dbReference type="PROSITE" id="PS01300">
    <property type="entry name" value="RECR"/>
    <property type="match status" value="1"/>
</dbReference>
<dbReference type="PROSITE" id="PS50880">
    <property type="entry name" value="TOPRIM"/>
    <property type="match status" value="1"/>
</dbReference>
<reference key="1">
    <citation type="journal article" date="2009" name="J. Bacteriol.">
        <title>Complete genome sequence of Erythrobacter litoralis HTCC2594.</title>
        <authorList>
            <person name="Oh H.M."/>
            <person name="Giovannoni S.J."/>
            <person name="Ferriera S."/>
            <person name="Johnson J."/>
            <person name="Cho J.C."/>
        </authorList>
    </citation>
    <scope>NUCLEOTIDE SEQUENCE [LARGE SCALE GENOMIC DNA]</scope>
    <source>
        <strain>HTCC2594</strain>
    </source>
</reference>
<organism>
    <name type="scientific">Erythrobacter litoralis (strain HTCC2594)</name>
    <dbReference type="NCBI Taxonomy" id="314225"/>
    <lineage>
        <taxon>Bacteria</taxon>
        <taxon>Pseudomonadati</taxon>
        <taxon>Pseudomonadota</taxon>
        <taxon>Alphaproteobacteria</taxon>
        <taxon>Sphingomonadales</taxon>
        <taxon>Erythrobacteraceae</taxon>
        <taxon>Erythrobacter/Porphyrobacter group</taxon>
        <taxon>Erythrobacter</taxon>
    </lineage>
</organism>
<gene>
    <name evidence="1" type="primary">recR</name>
    <name type="ordered locus">ELI_02075</name>
</gene>
<feature type="chain" id="PRO_0000322889" description="Recombination protein RecR">
    <location>
        <begin position="1"/>
        <end position="198"/>
    </location>
</feature>
<feature type="domain" description="Toprim" evidence="1">
    <location>
        <begin position="79"/>
        <end position="174"/>
    </location>
</feature>
<feature type="zinc finger region" description="C4-type" evidence="1">
    <location>
        <begin position="56"/>
        <end position="71"/>
    </location>
</feature>
<comment type="function">
    <text evidence="1">May play a role in DNA repair. It seems to be involved in an RecBC-independent recombinational process of DNA repair. It may act with RecF and RecO.</text>
</comment>
<comment type="similarity">
    <text evidence="1">Belongs to the RecR family.</text>
</comment>
<sequence>MASQEIEQLASTLARLPGLGPRSARRAVLWLVKKRDTALPALLEALEGVQDRLVECDTCGNVDTQNPCGICADPRRDRKSICVVEDVADLWALDRARLFTGRYHVLGGKLSALDGVRPEDLNIANLLGRVEEGGIDEVVLAMNATLEGQTTSHYIAERLEEFPVRITQLAHGLPVGGELDYLDEGTLAQALRARRPVQ</sequence>
<name>RECR_ERYLH</name>
<proteinExistence type="inferred from homology"/>
<keyword id="KW-0227">DNA damage</keyword>
<keyword id="KW-0233">DNA recombination</keyword>
<keyword id="KW-0234">DNA repair</keyword>
<keyword id="KW-0479">Metal-binding</keyword>
<keyword id="KW-1185">Reference proteome</keyword>
<keyword id="KW-0862">Zinc</keyword>
<keyword id="KW-0863">Zinc-finger</keyword>
<accession>Q2NCT4</accession>
<protein>
    <recommendedName>
        <fullName evidence="1">Recombination protein RecR</fullName>
    </recommendedName>
</protein>
<evidence type="ECO:0000255" key="1">
    <source>
        <dbReference type="HAMAP-Rule" id="MF_00017"/>
    </source>
</evidence>